<proteinExistence type="inferred from homology"/>
<dbReference type="EC" id="5.6.1.7" evidence="1"/>
<dbReference type="EMBL" id="CP000841">
    <property type="protein sequence ID" value="ABW32703.1"/>
    <property type="molecule type" value="Genomic_DNA"/>
</dbReference>
<dbReference type="SMR" id="A8ZNW7"/>
<dbReference type="KEGG" id="amr:AM1_D0208"/>
<dbReference type="HOGENOM" id="CLU_016503_3_0_3"/>
<dbReference type="Proteomes" id="UP000000268">
    <property type="component" value="Plasmid pREB4"/>
</dbReference>
<dbReference type="GO" id="GO:0005737">
    <property type="term" value="C:cytoplasm"/>
    <property type="evidence" value="ECO:0007669"/>
    <property type="project" value="UniProtKB-SubCell"/>
</dbReference>
<dbReference type="GO" id="GO:0005524">
    <property type="term" value="F:ATP binding"/>
    <property type="evidence" value="ECO:0007669"/>
    <property type="project" value="UniProtKB-UniRule"/>
</dbReference>
<dbReference type="GO" id="GO:0140662">
    <property type="term" value="F:ATP-dependent protein folding chaperone"/>
    <property type="evidence" value="ECO:0007669"/>
    <property type="project" value="InterPro"/>
</dbReference>
<dbReference type="GO" id="GO:0016853">
    <property type="term" value="F:isomerase activity"/>
    <property type="evidence" value="ECO:0007669"/>
    <property type="project" value="UniProtKB-KW"/>
</dbReference>
<dbReference type="GO" id="GO:0051082">
    <property type="term" value="F:unfolded protein binding"/>
    <property type="evidence" value="ECO:0007669"/>
    <property type="project" value="UniProtKB-UniRule"/>
</dbReference>
<dbReference type="GO" id="GO:0042026">
    <property type="term" value="P:protein refolding"/>
    <property type="evidence" value="ECO:0007669"/>
    <property type="project" value="UniProtKB-UniRule"/>
</dbReference>
<dbReference type="CDD" id="cd03344">
    <property type="entry name" value="GroEL"/>
    <property type="match status" value="1"/>
</dbReference>
<dbReference type="FunFam" id="3.50.7.10:FF:000001">
    <property type="entry name" value="60 kDa chaperonin"/>
    <property type="match status" value="1"/>
</dbReference>
<dbReference type="Gene3D" id="3.50.7.10">
    <property type="entry name" value="GroEL"/>
    <property type="match status" value="1"/>
</dbReference>
<dbReference type="Gene3D" id="1.10.560.10">
    <property type="entry name" value="GroEL-like equatorial domain"/>
    <property type="match status" value="1"/>
</dbReference>
<dbReference type="Gene3D" id="3.30.260.10">
    <property type="entry name" value="TCP-1-like chaperonin intermediate domain"/>
    <property type="match status" value="1"/>
</dbReference>
<dbReference type="HAMAP" id="MF_00600">
    <property type="entry name" value="CH60"/>
    <property type="match status" value="1"/>
</dbReference>
<dbReference type="InterPro" id="IPR018370">
    <property type="entry name" value="Chaperonin_Cpn60_CS"/>
</dbReference>
<dbReference type="InterPro" id="IPR001844">
    <property type="entry name" value="Cpn60/GroEL"/>
</dbReference>
<dbReference type="InterPro" id="IPR002423">
    <property type="entry name" value="Cpn60/GroEL/TCP-1"/>
</dbReference>
<dbReference type="InterPro" id="IPR027409">
    <property type="entry name" value="GroEL-like_apical_dom_sf"/>
</dbReference>
<dbReference type="InterPro" id="IPR027413">
    <property type="entry name" value="GROEL-like_equatorial_sf"/>
</dbReference>
<dbReference type="InterPro" id="IPR027410">
    <property type="entry name" value="TCP-1-like_intermed_sf"/>
</dbReference>
<dbReference type="NCBIfam" id="TIGR02348">
    <property type="entry name" value="GroEL"/>
    <property type="match status" value="1"/>
</dbReference>
<dbReference type="NCBIfam" id="NF000592">
    <property type="entry name" value="PRK00013.1"/>
    <property type="match status" value="1"/>
</dbReference>
<dbReference type="NCBIfam" id="NF009487">
    <property type="entry name" value="PRK12849.1"/>
    <property type="match status" value="1"/>
</dbReference>
<dbReference type="NCBIfam" id="NF009488">
    <property type="entry name" value="PRK12850.1"/>
    <property type="match status" value="1"/>
</dbReference>
<dbReference type="NCBIfam" id="NF009489">
    <property type="entry name" value="PRK12851.1"/>
    <property type="match status" value="1"/>
</dbReference>
<dbReference type="PANTHER" id="PTHR45633">
    <property type="entry name" value="60 KDA HEAT SHOCK PROTEIN, MITOCHONDRIAL"/>
    <property type="match status" value="1"/>
</dbReference>
<dbReference type="Pfam" id="PF00118">
    <property type="entry name" value="Cpn60_TCP1"/>
    <property type="match status" value="1"/>
</dbReference>
<dbReference type="PRINTS" id="PR00298">
    <property type="entry name" value="CHAPERONIN60"/>
</dbReference>
<dbReference type="SUPFAM" id="SSF52029">
    <property type="entry name" value="GroEL apical domain-like"/>
    <property type="match status" value="1"/>
</dbReference>
<dbReference type="SUPFAM" id="SSF48592">
    <property type="entry name" value="GroEL equatorial domain-like"/>
    <property type="match status" value="2"/>
</dbReference>
<dbReference type="PROSITE" id="PS00296">
    <property type="entry name" value="CHAPERONINS_CPN60"/>
    <property type="match status" value="1"/>
</dbReference>
<keyword id="KW-0067">ATP-binding</keyword>
<keyword id="KW-0143">Chaperone</keyword>
<keyword id="KW-0963">Cytoplasm</keyword>
<keyword id="KW-0413">Isomerase</keyword>
<keyword id="KW-0547">Nucleotide-binding</keyword>
<keyword id="KW-0614">Plasmid</keyword>
<keyword id="KW-1185">Reference proteome</keyword>
<gene>
    <name evidence="1" type="primary">groEL3</name>
    <name evidence="1" type="synonym">groL3</name>
    <name type="ordered locus">AM1_D0208</name>
</gene>
<reference key="1">
    <citation type="journal article" date="2008" name="Proc. Natl. Acad. Sci. U.S.A.">
        <title>Niche adaptation and genome expansion in the chlorophyll d-producing cyanobacterium Acaryochloris marina.</title>
        <authorList>
            <person name="Swingley W.D."/>
            <person name="Chen M."/>
            <person name="Cheung P.C."/>
            <person name="Conrad A.L."/>
            <person name="Dejesa L.C."/>
            <person name="Hao J."/>
            <person name="Honchak B.M."/>
            <person name="Karbach L.E."/>
            <person name="Kurdoglu A."/>
            <person name="Lahiri S."/>
            <person name="Mastrian S.D."/>
            <person name="Miyashita H."/>
            <person name="Page L."/>
            <person name="Ramakrishna P."/>
            <person name="Satoh S."/>
            <person name="Sattley W.M."/>
            <person name="Shimada Y."/>
            <person name="Taylor H.L."/>
            <person name="Tomo T."/>
            <person name="Tsuchiya T."/>
            <person name="Wang Z.T."/>
            <person name="Raymond J."/>
            <person name="Mimuro M."/>
            <person name="Blankenship R.E."/>
            <person name="Touchman J.W."/>
        </authorList>
    </citation>
    <scope>NUCLEOTIDE SEQUENCE [LARGE SCALE GENOMIC DNA]</scope>
    <source>
        <strain>MBIC 11017</strain>
    </source>
</reference>
<organism>
    <name type="scientific">Acaryochloris marina (strain MBIC 11017)</name>
    <dbReference type="NCBI Taxonomy" id="329726"/>
    <lineage>
        <taxon>Bacteria</taxon>
        <taxon>Bacillati</taxon>
        <taxon>Cyanobacteriota</taxon>
        <taxon>Cyanophyceae</taxon>
        <taxon>Acaryochloridales</taxon>
        <taxon>Acaryochloridaceae</taxon>
        <taxon>Acaryochloris</taxon>
    </lineage>
</organism>
<comment type="function">
    <text evidence="1">Together with its co-chaperonin GroES, plays an essential role in assisting protein folding. The GroEL-GroES system forms a nano-cage that allows encapsulation of the non-native substrate proteins and provides a physical environment optimized to promote and accelerate protein folding.</text>
</comment>
<comment type="catalytic activity">
    <reaction evidence="1">
        <text>ATP + H2O + a folded polypeptide = ADP + phosphate + an unfolded polypeptide.</text>
        <dbReference type="EC" id="5.6.1.7"/>
    </reaction>
</comment>
<comment type="subunit">
    <text evidence="1">Forms a cylinder of 14 subunits composed of two heptameric rings stacked back-to-back. Interacts with the co-chaperonin GroES.</text>
</comment>
<comment type="subcellular location">
    <subcellularLocation>
        <location evidence="1">Cytoplasm</location>
    </subcellularLocation>
</comment>
<comment type="similarity">
    <text evidence="1">Belongs to the chaperonin (HSP60) family.</text>
</comment>
<feature type="chain" id="PRO_0000331960" description="Chaperonin GroEL 3">
    <location>
        <begin position="1"/>
        <end position="537"/>
    </location>
</feature>
<feature type="binding site" evidence="1">
    <location>
        <begin position="30"/>
        <end position="33"/>
    </location>
    <ligand>
        <name>ATP</name>
        <dbReference type="ChEBI" id="CHEBI:30616"/>
    </ligand>
</feature>
<feature type="binding site" evidence="1">
    <location>
        <begin position="87"/>
        <end position="91"/>
    </location>
    <ligand>
        <name>ATP</name>
        <dbReference type="ChEBI" id="CHEBI:30616"/>
    </ligand>
</feature>
<feature type="binding site" evidence="1">
    <location>
        <position position="414"/>
    </location>
    <ligand>
        <name>ATP</name>
        <dbReference type="ChEBI" id="CHEBI:30616"/>
    </ligand>
</feature>
<feature type="binding site" evidence="1">
    <location>
        <begin position="480"/>
        <end position="482"/>
    </location>
    <ligand>
        <name>ATP</name>
        <dbReference type="ChEBI" id="CHEBI:30616"/>
    </ligand>
</feature>
<feature type="binding site" evidence="1">
    <location>
        <position position="496"/>
    </location>
    <ligand>
        <name>ATP</name>
        <dbReference type="ChEBI" id="CHEBI:30616"/>
    </ligand>
</feature>
<evidence type="ECO:0000255" key="1">
    <source>
        <dbReference type="HAMAP-Rule" id="MF_00600"/>
    </source>
</evidence>
<geneLocation type="plasmid">
    <name>pREB4</name>
</geneLocation>
<name>CH603_ACAM1</name>
<accession>A8ZNW7</accession>
<protein>
    <recommendedName>
        <fullName evidence="1">Chaperonin GroEL 3</fullName>
        <ecNumber evidence="1">5.6.1.7</ecNumber>
    </recommendedName>
    <alternativeName>
        <fullName evidence="1">60 kDa chaperonin 3</fullName>
    </alternativeName>
    <alternativeName>
        <fullName evidence="1">Chaperonin-60 3</fullName>
        <shortName evidence="1">Cpn60 3</shortName>
    </alternativeName>
</protein>
<sequence>MMAKSIQYDTAARHALEQGIDLLTEAVAVTLGPRGRNVVLEQKFGPPQIVNDGITIAKEIELDNPLANTGVALLRQVAAKTNDAAGDGTTTAVVLSHAMVKEGLRNIAAGANPMAIRRGIDQATQFLLDQIAEHALPVKDSNAISQVGTIAAGNDETVGQMIAAAMAKVGQQGVISLEEGQSMQTEVEVTEGMRFDKGYISPYFVTDAERMVTTLDDAYLLLTDKKITLVNALLPILENVTQTGKPLVIIAEDIEKEALATLVLNQLRGTVRVAGVKAPGFGDRRKDLLADIAVLTGGQVISEDTGLTLENATLEMMGRARQVVITKDHTTLISESNEAAVKARCEQIHRLIDETDSSFEKEKLHERLAQLSGGVAVIKVGAATETEMKDRKLKLEDAINATQAAVEEGIVPGGGTTLVHLAPQLEDWSAEHLVGDELIGAMILVRSLSAPLRQIVENAGLNGGVVVEQVKTLPFNTGYDALNNQYVDMFTAGIVDPAKVTSAGLRNAASIAGMVLTTECIIAEQSQATTKDLANAG</sequence>